<gene>
    <name type="ordered locus">Rv0574c</name>
</gene>
<dbReference type="EMBL" id="AL123456">
    <property type="protein sequence ID" value="CCP43312.1"/>
    <property type="molecule type" value="Genomic_DNA"/>
</dbReference>
<dbReference type="PIR" id="E70933">
    <property type="entry name" value="E70933"/>
</dbReference>
<dbReference type="RefSeq" id="NP_215088.1">
    <property type="nucleotide sequence ID" value="NC_000962.3"/>
</dbReference>
<dbReference type="RefSeq" id="WP_003403008.1">
    <property type="nucleotide sequence ID" value="NZ_NVQJ01000036.1"/>
</dbReference>
<dbReference type="SMR" id="P9WM79"/>
<dbReference type="STRING" id="83332.Rv0574c"/>
<dbReference type="PaxDb" id="83332-Rv0574c"/>
<dbReference type="GeneID" id="887721"/>
<dbReference type="KEGG" id="mtu:Rv0574c"/>
<dbReference type="KEGG" id="mtv:RVBD_0574c"/>
<dbReference type="TubercuList" id="Rv0574c"/>
<dbReference type="eggNOG" id="COG2843">
    <property type="taxonomic scope" value="Bacteria"/>
</dbReference>
<dbReference type="InParanoid" id="P9WM79"/>
<dbReference type="OrthoDB" id="9810718at2"/>
<dbReference type="PhylomeDB" id="P9WM79"/>
<dbReference type="PHI-base" id="PHI:4898"/>
<dbReference type="Proteomes" id="UP000001584">
    <property type="component" value="Chromosome"/>
</dbReference>
<dbReference type="CDD" id="cd07381">
    <property type="entry name" value="MPP_CapA"/>
    <property type="match status" value="1"/>
</dbReference>
<dbReference type="Gene3D" id="3.60.21.10">
    <property type="match status" value="1"/>
</dbReference>
<dbReference type="InterPro" id="IPR019079">
    <property type="entry name" value="Capsule_synth_CapA"/>
</dbReference>
<dbReference type="InterPro" id="IPR052169">
    <property type="entry name" value="CW_Biosynth-Accessory"/>
</dbReference>
<dbReference type="InterPro" id="IPR029052">
    <property type="entry name" value="Metallo-depent_PP-like"/>
</dbReference>
<dbReference type="PANTHER" id="PTHR33393">
    <property type="entry name" value="POLYGLUTAMINE SYNTHESIS ACCESSORY PROTEIN RV0574C-RELATED"/>
    <property type="match status" value="1"/>
</dbReference>
<dbReference type="PANTHER" id="PTHR33393:SF11">
    <property type="entry name" value="POLYGLUTAMINE SYNTHESIS ACCESSORY PROTEIN RV0574C-RELATED"/>
    <property type="match status" value="1"/>
</dbReference>
<dbReference type="Pfam" id="PF09587">
    <property type="entry name" value="PGA_cap"/>
    <property type="match status" value="1"/>
</dbReference>
<dbReference type="SMART" id="SM00854">
    <property type="entry name" value="PGA_cap"/>
    <property type="match status" value="1"/>
</dbReference>
<dbReference type="SUPFAM" id="SSF56300">
    <property type="entry name" value="Metallo-dependent phosphatases"/>
    <property type="match status" value="1"/>
</dbReference>
<protein>
    <recommendedName>
        <fullName evidence="6">Probable polyglutamine synthesis accessory protein Rv0574c</fullName>
    </recommendedName>
</protein>
<organism>
    <name type="scientific">Mycobacterium tuberculosis (strain ATCC 25618 / H37Rv)</name>
    <dbReference type="NCBI Taxonomy" id="83332"/>
    <lineage>
        <taxon>Bacteria</taxon>
        <taxon>Bacillati</taxon>
        <taxon>Actinomycetota</taxon>
        <taxon>Actinomycetes</taxon>
        <taxon>Mycobacteriales</taxon>
        <taxon>Mycobacteriaceae</taxon>
        <taxon>Mycobacterium</taxon>
        <taxon>Mycobacterium tuberculosis complex</taxon>
    </lineage>
</organism>
<comment type="function">
    <text evidence="5">Could be involved in the biosynthesis, transport or localization of poly-alpha-L-glutamine (PLG), a cell wall component. Contributes to stress tolerance and virulence.</text>
</comment>
<comment type="induction">
    <text evidence="1 2 3 4 5">A member of the dormancy regulon. Induced in response to reduced oxygen tension (hypoxia), low levels of nitric oxide (NO), carbon monoxide (CO) and carbon dioxide (CO(2)). Expression peaks in the late log phase of growth.</text>
</comment>
<comment type="disruption phenotype">
    <text evidence="5">Disruption mutant shows reduced PLG content in the cell wall, increased sensitivity to chemical and mechanical agents, reduction of biofilm formation and attenuated virulence.</text>
</comment>
<comment type="similarity">
    <text evidence="6">Belongs to the CapA family.</text>
</comment>
<evidence type="ECO:0000269" key="1">
    <source>
    </source>
</evidence>
<evidence type="ECO:0000269" key="2">
    <source>
    </source>
</evidence>
<evidence type="ECO:0000269" key="3">
    <source>
    </source>
</evidence>
<evidence type="ECO:0000269" key="4">
    <source>
    </source>
</evidence>
<evidence type="ECO:0000269" key="5">
    <source>
    </source>
</evidence>
<evidence type="ECO:0000305" key="6"/>
<accession>P9WM79</accession>
<accession>L0T731</accession>
<accession>O53771</accession>
<accession>Q7D9L9</accession>
<feature type="chain" id="PRO_0000392686" description="Probable polyglutamine synthesis accessory protein Rv0574c">
    <location>
        <begin position="1"/>
        <end position="380"/>
    </location>
</feature>
<sequence length="380" mass="41547">MAGNPDVVTVLLGGDVMLGRGVDQILPHPGKPQLRERYMRDATGYVRLAERVNGRIPLPVDWRWPWGEALAVLENTATDVCLINLETTITADGEFADRKPVCYRMHPDNVPALTALRPHVCALANNHILDFGYQGLTDTVAALAGAGIQSVGAGADLLAARRSALVTVGHERRVIVGSVAAESSGVPESWAARRDRPGVWLIRDPAQRDVADDVAAQVLADKRPGDIAIVSMHWGSNWGYATAPGDVAFAHRLIDAGIDMVHGHSSHHPRPIEIYRGKPILYGCGDVVDDYEGIGGHESFRSELRLLYLTVTDPASGNLISLQMLPLRVSRMRLQRASQTDTEWLRNTIERISRRFGIRVVTRPDNLLEVVPAANLTSKE</sequence>
<proteinExistence type="evidence at protein level"/>
<name>Y0574_MYCTU</name>
<reference key="1">
    <citation type="journal article" date="1998" name="Nature">
        <title>Deciphering the biology of Mycobacterium tuberculosis from the complete genome sequence.</title>
        <authorList>
            <person name="Cole S.T."/>
            <person name="Brosch R."/>
            <person name="Parkhill J."/>
            <person name="Garnier T."/>
            <person name="Churcher C.M."/>
            <person name="Harris D.E."/>
            <person name="Gordon S.V."/>
            <person name="Eiglmeier K."/>
            <person name="Gas S."/>
            <person name="Barry C.E. III"/>
            <person name="Tekaia F."/>
            <person name="Badcock K."/>
            <person name="Basham D."/>
            <person name="Brown D."/>
            <person name="Chillingworth T."/>
            <person name="Connor R."/>
            <person name="Davies R.M."/>
            <person name="Devlin K."/>
            <person name="Feltwell T."/>
            <person name="Gentles S."/>
            <person name="Hamlin N."/>
            <person name="Holroyd S."/>
            <person name="Hornsby T."/>
            <person name="Jagels K."/>
            <person name="Krogh A."/>
            <person name="McLean J."/>
            <person name="Moule S."/>
            <person name="Murphy L.D."/>
            <person name="Oliver S."/>
            <person name="Osborne J."/>
            <person name="Quail M.A."/>
            <person name="Rajandream M.A."/>
            <person name="Rogers J."/>
            <person name="Rutter S."/>
            <person name="Seeger K."/>
            <person name="Skelton S."/>
            <person name="Squares S."/>
            <person name="Squares R."/>
            <person name="Sulston J.E."/>
            <person name="Taylor K."/>
            <person name="Whitehead S."/>
            <person name="Barrell B.G."/>
        </authorList>
    </citation>
    <scope>NUCLEOTIDE SEQUENCE [LARGE SCALE GENOMIC DNA]</scope>
    <source>
        <strain>ATCC 25618 / H37Rv</strain>
    </source>
</reference>
<reference key="2">
    <citation type="journal article" date="2001" name="Proc. Natl. Acad. Sci. U.S.A.">
        <title>Regulation of the Mycobacterium tuberculosis hypoxic response gene encoding alpha -crystallin.</title>
        <authorList>
            <person name="Sherman D.R."/>
            <person name="Voskuil M."/>
            <person name="Schnappinger D."/>
            <person name="Liao R."/>
            <person name="Harrell M.I."/>
            <person name="Schoolnik G.K."/>
        </authorList>
    </citation>
    <scope>INDUCTION BY HYPOXIA</scope>
    <source>
        <strain>ATCC 25618 / H37Rv</strain>
    </source>
</reference>
<reference key="3">
    <citation type="journal article" date="2003" name="J. Exp. Med.">
        <title>Inhibition of respiration by nitric oxide induces a Mycobacterium tuberculosis dormancy program.</title>
        <authorList>
            <person name="Voskuil M.I."/>
            <person name="Schnappinger D."/>
            <person name="Visconti K.C."/>
            <person name="Harrell M.I."/>
            <person name="Dolganov G.M."/>
            <person name="Sherman D.R."/>
            <person name="Schoolnik G.K."/>
        </authorList>
    </citation>
    <scope>INDUCTION BY NITRIC OXIDE (NO) AND BY HYPOXIA</scope>
    <scope>DORMANCY REGULON</scope>
    <source>
        <strain>ATCC 25618 / H37Rv</strain>
    </source>
</reference>
<reference key="4">
    <citation type="journal article" date="2008" name="Cell Host Microbe">
        <title>Mycobacterium tuberculosis senses host-derived carbon monoxide during macrophage infection.</title>
        <authorList>
            <person name="Shiloh M.U."/>
            <person name="Manzanillo P."/>
            <person name="Cox J.S."/>
        </authorList>
    </citation>
    <scope>INDUCTION BY CARBON MONOXIDE (CO)</scope>
    <source>
        <strain>ATCC 35801 / TMC 107 / Erdman</strain>
    </source>
</reference>
<reference key="5">
    <citation type="journal article" date="2008" name="J. Biol. Chem.">
        <title>Heme oxygenase-1-derived carbon monoxide induces the Mycobacterium tuberculosis dormancy regulon.</title>
        <authorList>
            <person name="Kumar A."/>
            <person name="Deshane J.S."/>
            <person name="Crossman D.K."/>
            <person name="Bolisetty S."/>
            <person name="Yan B.S."/>
            <person name="Kramnik I."/>
            <person name="Agarwal A."/>
            <person name="Steyn A.J."/>
        </authorList>
    </citation>
    <scope>INDUCTION BY CARBON MONOXIDE (CO)</scope>
    <scope>DORMANCY REGULON</scope>
    <source>
        <strain>ATCC 25618 / H37Rv</strain>
    </source>
</reference>
<reference key="6">
    <citation type="journal article" date="2011" name="Mol. Cell. Proteomics">
        <title>Proteogenomic analysis of Mycobacterium tuberculosis by high resolution mass spectrometry.</title>
        <authorList>
            <person name="Kelkar D.S."/>
            <person name="Kumar D."/>
            <person name="Kumar P."/>
            <person name="Balakrishnan L."/>
            <person name="Muthusamy B."/>
            <person name="Yadav A.K."/>
            <person name="Shrivastava P."/>
            <person name="Marimuthu A."/>
            <person name="Anand S."/>
            <person name="Sundaram H."/>
            <person name="Kingsbury R."/>
            <person name="Harsha H.C."/>
            <person name="Nair B."/>
            <person name="Prasad T.S."/>
            <person name="Chauhan D.S."/>
            <person name="Katoch K."/>
            <person name="Katoch V.M."/>
            <person name="Kumar P."/>
            <person name="Chaerkady R."/>
            <person name="Ramachandran S."/>
            <person name="Dash D."/>
            <person name="Pandey A."/>
        </authorList>
    </citation>
    <scope>IDENTIFICATION BY MASS SPECTROMETRY [LARGE SCALE ANALYSIS]</scope>
    <source>
        <strain>ATCC 25618 / H37Rv</strain>
    </source>
</reference>
<reference key="7">
    <citation type="journal article" date="2015" name="Infect. Immun.">
        <title>The conserved hypothetical protein Rv0574c is required for cell wall integrity, stress tolerance, and virulence of Mycobacterium tuberculosis.</title>
        <authorList>
            <person name="Garg R."/>
            <person name="Tripathi D."/>
            <person name="Kant S."/>
            <person name="Chandra H."/>
            <person name="Bhatnagar R."/>
            <person name="Banerjee N."/>
        </authorList>
    </citation>
    <scope>FUNCTION</scope>
    <scope>INDUCTION</scope>
    <scope>DISRUPTION PHENOTYPE</scope>
    <source>
        <strain>H37Rv</strain>
    </source>
</reference>
<keyword id="KW-1185">Reference proteome</keyword>
<keyword id="KW-0346">Stress response</keyword>